<sequence>MAPLDLTRGQTDACSTENKDILCRNVLIYGHCRYEDQGCTYNHDQNKNSSQPEAPSKKMFNVDSPSFTPSGQSTVLPKKTTLSSQAASAAPFTPRGGGTPTLQTTAESTMFNPAAIREFTPQNYDLGNNNANGISQENGLYPDPFTMSTMGTALPTAGQYNLPLYGDHSGLAAPGAPFYPPHAAYPTGPIQPPHYHLYQPFGPYRQELQPWQRATYDFFMPQNLREDLQKKQFATLQVIPNSGLPQLEHWHSLVPLDTSNRKNTSCFGYPSWVYKAQNSRNGRHYALRRLEGYRLTNEKAILNVMKDWKKIKNASIVTIHEVFTTREFGDSSLIFAYDFHPLSKTLQEHHFQPIHGNRYRPPPAVPENTIWGYICQIANALKTIHSNRLAARCLEPSKIILTDINRIRLSACAILDVVQFGMNSRSVVELQQEDFVKFGKLILSLATGTLPAHLNNIPAALETLGNKYSANLKSAVNWLLDTSSGETKTIEHFMTGIASQMTTFFDLALQDNDEKLFHLAREVENGRIARSLMKLLTILERGDYDGVPSWSETGDRYQLKLFRDYVFHRVDADGKPNLSIGHMLTCMSKLEAGVDENILLTSRDNETVFVLSYRELRQMYDRAFNELVKASKTGAPGANT</sequence>
<accession>G0S0Y3</accession>
<accession>A0A068EX63</accession>
<accession>A0A068F1B9</accession>
<name>PAN3_CHATD</name>
<reference evidence="7 8" key="1">
    <citation type="journal article" date="2014" name="EMBO J.">
        <title>Structural basis for Pan3 binding to Pan2 and its function in mRNA recruitment and deadenylation.</title>
        <authorList>
            <person name="Wolf J."/>
            <person name="Valkov E."/>
            <person name="Allen M.D."/>
            <person name="Meineke B."/>
            <person name="Gordiyenko Y."/>
            <person name="McLaughlin S.H."/>
            <person name="Olsen T.M."/>
            <person name="Robinson C.V."/>
            <person name="Bycroft M."/>
            <person name="Stewart M."/>
            <person name="Passmore L.A."/>
        </authorList>
    </citation>
    <scope>NUCLEOTIDE SEQUENCE [MRNA] (ISOFORMS 1 AND 2)</scope>
    <scope>X-RAY CRYSTALLOGRAPHY (2.42 ANGSTROMS) OF 293-640 IN COMPLEX WITH ATP</scope>
    <scope>FUNCTION</scope>
    <scope>SUBUNIT</scope>
</reference>
<reference key="2">
    <citation type="journal article" date="2011" name="Cell">
        <title>Insight into structure and assembly of the nuclear pore complex by utilizing the genome of a eukaryotic thermophile.</title>
        <authorList>
            <person name="Amlacher S."/>
            <person name="Sarges P."/>
            <person name="Flemming D."/>
            <person name="van Noort V."/>
            <person name="Kunze R."/>
            <person name="Devos D.P."/>
            <person name="Arumugam M."/>
            <person name="Bork P."/>
            <person name="Hurt E."/>
        </authorList>
    </citation>
    <scope>NUCLEOTIDE SEQUENCE [LARGE SCALE GENOMIC DNA]</scope>
    <source>
        <strain>DSM 1495 / CBS 144.50 / IMI 039719</strain>
    </source>
</reference>
<reference evidence="9" key="3">
    <citation type="journal article" date="2014" name="Nat. Struct. Mol. Biol.">
        <title>An asymmetric PAN3 dimer recruits a single PAN2 exonuclease to mediate mRNA deadenylation and decay.</title>
        <authorList>
            <person name="Jonas S."/>
            <person name="Christie M."/>
            <person name="Peter D."/>
            <person name="Bhandari D."/>
            <person name="Loh B."/>
            <person name="Huntzinger E."/>
            <person name="Weichenrieder O."/>
            <person name="Izaurralde E."/>
        </authorList>
    </citation>
    <scope>X-RAY CRYSTALLOGRAPHY (1.89 ANGSTROMS) OF 522-629</scope>
</reference>
<proteinExistence type="evidence at protein level"/>
<comment type="function">
    <text evidence="1 3">Regulatory subunit of the poly(A)-nuclease (PAN) deadenylation complex, one of two cytoplasmic mRNA deadenylases involved in mRNA turnover. PAN specifically shortens poly(A) tails of RNA and the activity is stimulated by poly(A)-binding protein PAB1. PAN deadenylation is followed by rapid degradation of the shortened mRNA tails by the CCR4-NOT complex. Deadenylated mRNAs are then degraded by two alternative mechanisms, namely exosome-mediated 3'-5' exonucleolytic degradation, or deadenylation-dependent mRNA decaping and subsequent 5'-3' exonucleolytic degradation by XRN1. May also be involved in post-transcriptional maturation of mRNA poly(A) tails. PAN3 acts as a positive regulator for PAN activity, recruiting the catalytic subunit PAN2 to mRNA via its interaction with RNA and with PAB1.</text>
</comment>
<comment type="subunit">
    <text evidence="1 3">Homodimer. Forms a heterotrimer with a catalytic subunit PAN2 to form the poly(A)-nuclease (PAN) deadenylation complex. Interacts (via PAM-2 motif) with poly(A)-binding protein PAB1 (via PABC domain), conferring substrate specificity of the enzyme complex.</text>
</comment>
<comment type="interaction">
    <interactant intactId="EBI-9836608">
        <id>G0S0Y3</id>
    </interactant>
    <interactant intactId="EBI-9836534">
        <id>G0SAK8</id>
        <label>PAN2</label>
    </interactant>
    <organismsDiffer>false</organismsDiffer>
    <experiments>9</experiments>
</comment>
<comment type="subcellular location">
    <subcellularLocation>
        <location evidence="1">Cytoplasm</location>
    </subcellularLocation>
</comment>
<comment type="alternative products">
    <event type="alternative splicing"/>
    <isoform>
        <id>G0S0Y3-1</id>
        <name>1</name>
        <sequence type="displayed"/>
    </isoform>
    <isoform>
        <id>G0S0Y3-2</id>
        <name>2</name>
        <sequence type="described" ref="VSP_059086"/>
    </isoform>
</comment>
<comment type="domain">
    <text evidence="1">The N-terminal zinc finger binds to poly(A) RNA.</text>
</comment>
<comment type="domain">
    <text evidence="1">Contains a pseudokinase domain. The protein kinase domain is predicted to be catalytically inactive because some of the residues important for catalytic activity are substituted and it lacks the equivalent of the binding site for a peptide substrate. However, it has retained an ATP-binding site and ATP-binding is required for mRNA degradation, stimulating the activity of the PAN2 nuclease in vitro. The nucleotide-binding site is juxtaposed to the RNase active site of PAN2 in the complex and may actually bind nucleosides of a poly(A) RNA rather than ATP, feeding the poly(A)-tail to the active site of the deadenylase and thus increasing the efficiency with which this distributive enzyme degrades oligo(A) RNAs.</text>
</comment>
<comment type="domain">
    <text evidence="1">The pseudokinase domain, the coiled-coil (CC), and C-terminal knob domain (CK) form a structural unit (PKC) that forms an extensive high-affinity interaction surface for PAN2.</text>
</comment>
<comment type="similarity">
    <text evidence="1">Belongs to the protein kinase superfamily. PAN3 family.</text>
</comment>
<comment type="sequence caution" evidence="5">
    <conflict type="erroneous gene model prediction">
        <sequence resource="EMBL-CDS" id="EGS22693"/>
    </conflict>
</comment>
<evidence type="ECO:0000255" key="1">
    <source>
        <dbReference type="HAMAP-Rule" id="MF_03181"/>
    </source>
</evidence>
<evidence type="ECO:0000256" key="2">
    <source>
        <dbReference type="SAM" id="MobiDB-lite"/>
    </source>
</evidence>
<evidence type="ECO:0000269" key="3">
    <source>
    </source>
</evidence>
<evidence type="ECO:0000303" key="4">
    <source>
    </source>
</evidence>
<evidence type="ECO:0000305" key="5"/>
<evidence type="ECO:0000305" key="6">
    <source>
    </source>
</evidence>
<evidence type="ECO:0007744" key="7">
    <source>
        <dbReference type="PDB" id="4CYI"/>
    </source>
</evidence>
<evidence type="ECO:0007744" key="8">
    <source>
        <dbReference type="PDB" id="4CYJ"/>
    </source>
</evidence>
<evidence type="ECO:0007744" key="9">
    <source>
        <dbReference type="PDB" id="4D0K"/>
    </source>
</evidence>
<evidence type="ECO:0007829" key="10">
    <source>
        <dbReference type="PDB" id="4CYI"/>
    </source>
</evidence>
<evidence type="ECO:0007829" key="11">
    <source>
        <dbReference type="PDB" id="4CYJ"/>
    </source>
</evidence>
<evidence type="ECO:0007829" key="12">
    <source>
        <dbReference type="PDB" id="4D0K"/>
    </source>
</evidence>
<protein>
    <recommendedName>
        <fullName evidence="1">PAN2-PAN3 deadenylation complex subunit PAN3</fullName>
    </recommendedName>
    <alternativeName>
        <fullName evidence="1">PAB1P-dependent poly(A)-specific ribonuclease</fullName>
    </alternativeName>
    <alternativeName>
        <fullName evidence="1">Poly(A)-nuclease deadenylation complex subunit 3</fullName>
        <shortName evidence="1">PAN deadenylation complex subunit 3</shortName>
    </alternativeName>
</protein>
<feature type="chain" id="PRO_0000441675" description="PAN2-PAN3 deadenylation complex subunit PAN3">
    <location>
        <begin position="1"/>
        <end position="640"/>
    </location>
</feature>
<feature type="zinc finger region" description="C3H1-type" evidence="1">
    <location>
        <begin position="17"/>
        <end position="46"/>
    </location>
</feature>
<feature type="region of interest" description="Disordered" evidence="2">
    <location>
        <begin position="43"/>
        <end position="101"/>
    </location>
</feature>
<feature type="region of interest" description="Pseudokinase domain" evidence="1 6">
    <location>
        <begin position="237"/>
        <end position="498"/>
    </location>
</feature>
<feature type="region of interest" description="Knob domain" evidence="1 6">
    <location>
        <begin position="538"/>
        <end position="640"/>
    </location>
</feature>
<feature type="coiled-coil region" evidence="1 6">
    <location>
        <begin position="499"/>
        <end position="537"/>
    </location>
</feature>
<feature type="compositionally biased region" description="Polar residues" evidence="2">
    <location>
        <begin position="43"/>
        <end position="53"/>
    </location>
</feature>
<feature type="compositionally biased region" description="Polar residues" evidence="2">
    <location>
        <begin position="63"/>
        <end position="87"/>
    </location>
</feature>
<feature type="binding site" evidence="3">
    <location>
        <position position="263"/>
    </location>
    <ligand>
        <name>ATP</name>
        <dbReference type="ChEBI" id="CHEBI:30616"/>
    </ligand>
</feature>
<feature type="binding site" evidence="1 3">
    <location>
        <position position="288"/>
    </location>
    <ligand>
        <name>ATP</name>
        <dbReference type="ChEBI" id="CHEBI:30616"/>
    </ligand>
</feature>
<feature type="binding site" evidence="1 3">
    <location>
        <begin position="338"/>
        <end position="345"/>
    </location>
    <ligand>
        <name>ATP</name>
        <dbReference type="ChEBI" id="CHEBI:30616"/>
    </ligand>
</feature>
<feature type="binding site" evidence="1 3">
    <location>
        <begin position="397"/>
        <end position="398"/>
    </location>
    <ligand>
        <name>ATP</name>
        <dbReference type="ChEBI" id="CHEBI:30616"/>
    </ligand>
</feature>
<feature type="splice variant" id="VSP_059086" description="In isoform 2." evidence="4">
    <original>MAPLDLTRGQTDACSTENKDILCRNVLIYGHCRYEDQGCTYNHDQNKNSSQPEAPSKKMFNVDSPSFTPSGQSTVLPKKTTLSSQAASAAPFTPRGGGT</original>
    <variation>MTKTRTPPNQKP</variation>
    <location>
        <begin position="1"/>
        <end position="99"/>
    </location>
</feature>
<feature type="helix" evidence="11">
    <location>
        <begin position="209"/>
        <end position="213"/>
    </location>
</feature>
<feature type="turn" evidence="10">
    <location>
        <begin position="216"/>
        <end position="219"/>
    </location>
</feature>
<feature type="helix" evidence="10">
    <location>
        <begin position="224"/>
        <end position="236"/>
    </location>
</feature>
<feature type="strand" evidence="10">
    <location>
        <begin position="248"/>
        <end position="255"/>
    </location>
</feature>
<feature type="turn" evidence="10">
    <location>
        <begin position="265"/>
        <end position="267"/>
    </location>
</feature>
<feature type="strand" evidence="10">
    <location>
        <begin position="271"/>
        <end position="282"/>
    </location>
</feature>
<feature type="strand" evidence="10">
    <location>
        <begin position="284"/>
        <end position="291"/>
    </location>
</feature>
<feature type="helix" evidence="10">
    <location>
        <begin position="299"/>
        <end position="308"/>
    </location>
</feature>
<feature type="strand" evidence="10">
    <location>
        <begin position="319"/>
        <end position="325"/>
    </location>
</feature>
<feature type="strand" evidence="10">
    <location>
        <begin position="332"/>
        <end position="338"/>
    </location>
</feature>
<feature type="helix" evidence="10">
    <location>
        <begin position="346"/>
        <end position="350"/>
    </location>
</feature>
<feature type="strand" evidence="10">
    <location>
        <begin position="353"/>
        <end position="359"/>
    </location>
</feature>
<feature type="helix" evidence="10">
    <location>
        <begin position="367"/>
        <end position="386"/>
    </location>
</feature>
<feature type="strand" evidence="10">
    <location>
        <begin position="398"/>
        <end position="403"/>
    </location>
</feature>
<feature type="strand" evidence="10">
    <location>
        <begin position="406"/>
        <end position="409"/>
    </location>
</feature>
<feature type="helix" evidence="10">
    <location>
        <begin position="414"/>
        <end position="418"/>
    </location>
</feature>
<feature type="turn" evidence="10">
    <location>
        <begin position="419"/>
        <end position="422"/>
    </location>
</feature>
<feature type="helix" evidence="10">
    <location>
        <begin position="427"/>
        <end position="447"/>
    </location>
</feature>
<feature type="helix" evidence="10">
    <location>
        <begin position="451"/>
        <end position="453"/>
    </location>
</feature>
<feature type="helix" evidence="10">
    <location>
        <begin position="457"/>
        <end position="467"/>
    </location>
</feature>
<feature type="helix" evidence="10">
    <location>
        <begin position="470"/>
        <end position="480"/>
    </location>
</feature>
<feature type="strand" evidence="10">
    <location>
        <begin position="484"/>
        <end position="486"/>
    </location>
</feature>
<feature type="helix" evidence="10">
    <location>
        <begin position="490"/>
        <end position="496"/>
    </location>
</feature>
<feature type="helix" evidence="10">
    <location>
        <begin position="498"/>
        <end position="522"/>
    </location>
</feature>
<feature type="helix" evidence="12">
    <location>
        <begin position="527"/>
        <end position="538"/>
    </location>
</feature>
<feature type="helix" evidence="12">
    <location>
        <begin position="542"/>
        <end position="544"/>
    </location>
</feature>
<feature type="helix" evidence="12">
    <location>
        <begin position="548"/>
        <end position="550"/>
    </location>
</feature>
<feature type="helix" evidence="12">
    <location>
        <begin position="557"/>
        <end position="567"/>
    </location>
</feature>
<feature type="helix" evidence="12">
    <location>
        <begin position="580"/>
        <end position="592"/>
    </location>
</feature>
<feature type="strand" evidence="12">
    <location>
        <begin position="597"/>
        <end position="601"/>
    </location>
</feature>
<feature type="strand" evidence="12">
    <location>
        <begin position="608"/>
        <end position="612"/>
    </location>
</feature>
<feature type="helix" evidence="12">
    <location>
        <begin position="613"/>
        <end position="628"/>
    </location>
</feature>
<organism>
    <name type="scientific">Chaetomium thermophilum (strain DSM 1495 / CBS 144.50 / IMI 039719)</name>
    <name type="common">Thermochaetoides thermophila</name>
    <dbReference type="NCBI Taxonomy" id="759272"/>
    <lineage>
        <taxon>Eukaryota</taxon>
        <taxon>Fungi</taxon>
        <taxon>Dikarya</taxon>
        <taxon>Ascomycota</taxon>
        <taxon>Pezizomycotina</taxon>
        <taxon>Sordariomycetes</taxon>
        <taxon>Sordariomycetidae</taxon>
        <taxon>Sordariales</taxon>
        <taxon>Chaetomiaceae</taxon>
        <taxon>Thermochaetoides</taxon>
    </lineage>
</organism>
<dbReference type="EMBL" id="KJ657770">
    <property type="protein sequence ID" value="AID55017.1"/>
    <property type="molecule type" value="mRNA"/>
</dbReference>
<dbReference type="EMBL" id="KJ657771">
    <property type="protein sequence ID" value="AID55018.1"/>
    <property type="molecule type" value="mRNA"/>
</dbReference>
<dbReference type="EMBL" id="GL988039">
    <property type="protein sequence ID" value="EGS22693.1"/>
    <property type="status" value="ALT_SEQ"/>
    <property type="molecule type" value="Genomic_DNA"/>
</dbReference>
<dbReference type="RefSeq" id="XP_006691685.1">
    <property type="nucleotide sequence ID" value="XM_006691622.1"/>
</dbReference>
<dbReference type="PDB" id="4CYI">
    <property type="method" value="X-ray"/>
    <property type="resolution" value="2.42 A"/>
    <property type="chains" value="A/B/C/D/E/F/G/H=205-640"/>
</dbReference>
<dbReference type="PDB" id="4CYJ">
    <property type="method" value="X-ray"/>
    <property type="resolution" value="2.59 A"/>
    <property type="chains" value="A/B/C/D=205-640"/>
</dbReference>
<dbReference type="PDB" id="4D0K">
    <property type="method" value="X-ray"/>
    <property type="resolution" value="1.89 A"/>
    <property type="chains" value="B/C=522-629"/>
</dbReference>
<dbReference type="PDBsum" id="4CYI"/>
<dbReference type="PDBsum" id="4CYJ"/>
<dbReference type="PDBsum" id="4D0K"/>
<dbReference type="SMR" id="G0S0Y3"/>
<dbReference type="DIP" id="DIP-61542N"/>
<dbReference type="IntAct" id="G0S0Y3">
    <property type="interactions" value="1"/>
</dbReference>
<dbReference type="MINT" id="G0S0Y3"/>
<dbReference type="STRING" id="759272.G0S0Y3"/>
<dbReference type="GeneID" id="18255204"/>
<dbReference type="KEGG" id="cthr:CTHT_0011660"/>
<dbReference type="eggNOG" id="KOG3741">
    <property type="taxonomic scope" value="Eukaryota"/>
</dbReference>
<dbReference type="HOGENOM" id="CLU_016423_1_0_1"/>
<dbReference type="OrthoDB" id="204958at2759"/>
<dbReference type="EvolutionaryTrace" id="G0S0Y3"/>
<dbReference type="Proteomes" id="UP000008066">
    <property type="component" value="Unassembled WGS sequence"/>
</dbReference>
<dbReference type="GO" id="GO:0000932">
    <property type="term" value="C:P-body"/>
    <property type="evidence" value="ECO:0007669"/>
    <property type="project" value="TreeGrafter"/>
</dbReference>
<dbReference type="GO" id="GO:0031251">
    <property type="term" value="C:PAN complex"/>
    <property type="evidence" value="ECO:0007669"/>
    <property type="project" value="UniProtKB-UniRule"/>
</dbReference>
<dbReference type="GO" id="GO:0005524">
    <property type="term" value="F:ATP binding"/>
    <property type="evidence" value="ECO:0007669"/>
    <property type="project" value="UniProtKB-UniRule"/>
</dbReference>
<dbReference type="GO" id="GO:0008143">
    <property type="term" value="F:poly(A) binding"/>
    <property type="evidence" value="ECO:0007669"/>
    <property type="project" value="TreeGrafter"/>
</dbReference>
<dbReference type="GO" id="GO:0004672">
    <property type="term" value="F:protein kinase activity"/>
    <property type="evidence" value="ECO:0007669"/>
    <property type="project" value="InterPro"/>
</dbReference>
<dbReference type="GO" id="GO:0008270">
    <property type="term" value="F:zinc ion binding"/>
    <property type="evidence" value="ECO:0007669"/>
    <property type="project" value="UniProtKB-KW"/>
</dbReference>
<dbReference type="GO" id="GO:0006397">
    <property type="term" value="P:mRNA processing"/>
    <property type="evidence" value="ECO:0007669"/>
    <property type="project" value="UniProtKB-KW"/>
</dbReference>
<dbReference type="GO" id="GO:0000289">
    <property type="term" value="P:nuclear-transcribed mRNA poly(A) tail shortening"/>
    <property type="evidence" value="ECO:0007669"/>
    <property type="project" value="UniProtKB-UniRule"/>
</dbReference>
<dbReference type="Gene3D" id="1.10.287.3700">
    <property type="match status" value="1"/>
</dbReference>
<dbReference type="Gene3D" id="1.20.5.5160">
    <property type="match status" value="1"/>
</dbReference>
<dbReference type="Gene3D" id="6.10.250.3160">
    <property type="match status" value="1"/>
</dbReference>
<dbReference type="Gene3D" id="1.10.510.10">
    <property type="entry name" value="Transferase(Phosphotransferase) domain 1"/>
    <property type="match status" value="1"/>
</dbReference>
<dbReference type="HAMAP" id="MF_03181">
    <property type="entry name" value="PAN3"/>
    <property type="match status" value="1"/>
</dbReference>
<dbReference type="InterPro" id="IPR011009">
    <property type="entry name" value="Kinase-like_dom_sf"/>
</dbReference>
<dbReference type="InterPro" id="IPR030844">
    <property type="entry name" value="PAN3"/>
</dbReference>
<dbReference type="InterPro" id="IPR041332">
    <property type="entry name" value="Pan3_PK"/>
</dbReference>
<dbReference type="InterPro" id="IPR000719">
    <property type="entry name" value="Prot_kinase_dom"/>
</dbReference>
<dbReference type="InterPro" id="IPR000571">
    <property type="entry name" value="Znf_CCCH"/>
</dbReference>
<dbReference type="PANTHER" id="PTHR12272">
    <property type="entry name" value="DEADENYLATION COMPLEX SUBUNIT PAN3"/>
    <property type="match status" value="1"/>
</dbReference>
<dbReference type="PANTHER" id="PTHR12272:SF11">
    <property type="entry name" value="PAN2-PAN3 DEADENYLATION COMPLEX SUBUNIT PAN3"/>
    <property type="match status" value="1"/>
</dbReference>
<dbReference type="Pfam" id="PF18101">
    <property type="entry name" value="Pan3_PK"/>
    <property type="match status" value="1"/>
</dbReference>
<dbReference type="SMART" id="SM00220">
    <property type="entry name" value="S_TKc"/>
    <property type="match status" value="1"/>
</dbReference>
<dbReference type="SUPFAM" id="SSF56112">
    <property type="entry name" value="Protein kinase-like (PK-like)"/>
    <property type="match status" value="1"/>
</dbReference>
<dbReference type="PROSITE" id="PS50011">
    <property type="entry name" value="PROTEIN_KINASE_DOM"/>
    <property type="match status" value="1"/>
</dbReference>
<dbReference type="PROSITE" id="PS50103">
    <property type="entry name" value="ZF_C3H1"/>
    <property type="match status" value="1"/>
</dbReference>
<gene>
    <name evidence="1" type="primary">PAN3</name>
    <name type="ORF">CTHT_0011660</name>
</gene>
<keyword id="KW-0002">3D-structure</keyword>
<keyword id="KW-0025">Alternative splicing</keyword>
<keyword id="KW-0067">ATP-binding</keyword>
<keyword id="KW-0175">Coiled coil</keyword>
<keyword id="KW-0963">Cytoplasm</keyword>
<keyword id="KW-0479">Metal-binding</keyword>
<keyword id="KW-0507">mRNA processing</keyword>
<keyword id="KW-0547">Nucleotide-binding</keyword>
<keyword id="KW-1185">Reference proteome</keyword>
<keyword id="KW-0862">Zinc</keyword>
<keyword id="KW-0863">Zinc-finger</keyword>